<name>GLAK2_ARATH</name>
<dbReference type="EC" id="2.7.1.43"/>
<dbReference type="EMBL" id="AL163817">
    <property type="protein sequence ID" value="CAB87786.1"/>
    <property type="molecule type" value="Genomic_DNA"/>
</dbReference>
<dbReference type="EMBL" id="CP002688">
    <property type="protein sequence ID" value="AED92038.1"/>
    <property type="molecule type" value="Genomic_DNA"/>
</dbReference>
<dbReference type="EMBL" id="BT020237">
    <property type="protein sequence ID" value="AAV74231.1"/>
    <property type="status" value="ALT_INIT"/>
    <property type="molecule type" value="mRNA"/>
</dbReference>
<dbReference type="EMBL" id="BT020504">
    <property type="protein sequence ID" value="AAW39005.1"/>
    <property type="molecule type" value="mRNA"/>
</dbReference>
<dbReference type="PIR" id="T48620">
    <property type="entry name" value="T48620"/>
</dbReference>
<dbReference type="RefSeq" id="NP_196951.3">
    <property type="nucleotide sequence ID" value="NM_121451.5"/>
</dbReference>
<dbReference type="SMR" id="Q9LY82"/>
<dbReference type="FunCoup" id="Q9LY82">
    <property type="interactions" value="280"/>
</dbReference>
<dbReference type="STRING" id="3702.Q9LY82"/>
<dbReference type="PaxDb" id="3702-AT5G14470.1"/>
<dbReference type="ProteomicsDB" id="220771"/>
<dbReference type="DNASU" id="831298"/>
<dbReference type="EnsemblPlants" id="AT5G14470.1">
    <property type="protein sequence ID" value="AT5G14470.1"/>
    <property type="gene ID" value="AT5G14470"/>
</dbReference>
<dbReference type="GeneID" id="831298"/>
<dbReference type="Gramene" id="AT5G14470.1">
    <property type="protein sequence ID" value="AT5G14470.1"/>
    <property type="gene ID" value="AT5G14470"/>
</dbReference>
<dbReference type="KEGG" id="ath:AT5G14470"/>
<dbReference type="Araport" id="AT5G14470"/>
<dbReference type="TAIR" id="AT5G14470">
    <property type="gene designation" value="GALK2"/>
</dbReference>
<dbReference type="eggNOG" id="ENOG502QPXH">
    <property type="taxonomic scope" value="Eukaryota"/>
</dbReference>
<dbReference type="HOGENOM" id="CLU_050132_0_0_1"/>
<dbReference type="InParanoid" id="Q9LY82"/>
<dbReference type="OMA" id="GYQDAYM"/>
<dbReference type="OrthoDB" id="1924968at2759"/>
<dbReference type="PhylomeDB" id="Q9LY82"/>
<dbReference type="BRENDA" id="2.7.1.43">
    <property type="organism ID" value="399"/>
</dbReference>
<dbReference type="PRO" id="PR:Q9LY82"/>
<dbReference type="Proteomes" id="UP000006548">
    <property type="component" value="Chromosome 5"/>
</dbReference>
<dbReference type="ExpressionAtlas" id="Q9LY82">
    <property type="expression patterns" value="baseline and differential"/>
</dbReference>
<dbReference type="GO" id="GO:0005524">
    <property type="term" value="F:ATP binding"/>
    <property type="evidence" value="ECO:0007669"/>
    <property type="project" value="UniProtKB-KW"/>
</dbReference>
<dbReference type="GO" id="GO:0047940">
    <property type="term" value="F:glucuronokinase activity"/>
    <property type="evidence" value="ECO:0007669"/>
    <property type="project" value="UniProtKB-EC"/>
</dbReference>
<dbReference type="GO" id="GO:0046872">
    <property type="term" value="F:metal ion binding"/>
    <property type="evidence" value="ECO:0007669"/>
    <property type="project" value="UniProtKB-KW"/>
</dbReference>
<dbReference type="FunFam" id="3.30.230.120:FF:000003">
    <property type="entry name" value="Probable glucuronokinase 2"/>
    <property type="match status" value="1"/>
</dbReference>
<dbReference type="Gene3D" id="3.30.230.120">
    <property type="match status" value="1"/>
</dbReference>
<dbReference type="InterPro" id="IPR013750">
    <property type="entry name" value="GHMP_kinase_C_dom"/>
</dbReference>
<dbReference type="InterPro" id="IPR036554">
    <property type="entry name" value="GHMP_kinase_C_sf"/>
</dbReference>
<dbReference type="InterPro" id="IPR006204">
    <property type="entry name" value="GHMP_kinase_N_dom"/>
</dbReference>
<dbReference type="InterPro" id="IPR053034">
    <property type="entry name" value="Glucuronokinase-like"/>
</dbReference>
<dbReference type="InterPro" id="IPR020568">
    <property type="entry name" value="Ribosomal_Su5_D2-typ_SF"/>
</dbReference>
<dbReference type="PANTHER" id="PTHR38710">
    <property type="entry name" value="WITH PUTATIVE URIDYL PYROPHOSPHORYLASE-RELATED"/>
    <property type="match status" value="1"/>
</dbReference>
<dbReference type="PANTHER" id="PTHR38710:SF1">
    <property type="entry name" value="WITH PUTATIVE URIDYL PYROPHOSPHORYLASE-RELATED"/>
    <property type="match status" value="1"/>
</dbReference>
<dbReference type="Pfam" id="PF08544">
    <property type="entry name" value="GHMP_kinases_C"/>
    <property type="match status" value="1"/>
</dbReference>
<dbReference type="Pfam" id="PF00288">
    <property type="entry name" value="GHMP_kinases_N"/>
    <property type="match status" value="1"/>
</dbReference>
<dbReference type="PRINTS" id="PR00959">
    <property type="entry name" value="MEVGALKINASE"/>
</dbReference>
<dbReference type="SUPFAM" id="SSF55060">
    <property type="entry name" value="GHMP Kinase, C-terminal domain"/>
    <property type="match status" value="1"/>
</dbReference>
<dbReference type="SUPFAM" id="SSF54211">
    <property type="entry name" value="Ribosomal protein S5 domain 2-like"/>
    <property type="match status" value="1"/>
</dbReference>
<proteinExistence type="evidence at transcript level"/>
<gene>
    <name type="primary">GLCAK2</name>
    <name type="ordered locus">At5g14470</name>
    <name type="ORF">F18O22.260</name>
</gene>
<accession>Q9LY82</accession>
<accession>Q5PP60</accession>
<organism>
    <name type="scientific">Arabidopsis thaliana</name>
    <name type="common">Mouse-ear cress</name>
    <dbReference type="NCBI Taxonomy" id="3702"/>
    <lineage>
        <taxon>Eukaryota</taxon>
        <taxon>Viridiplantae</taxon>
        <taxon>Streptophyta</taxon>
        <taxon>Embryophyta</taxon>
        <taxon>Tracheophyta</taxon>
        <taxon>Spermatophyta</taxon>
        <taxon>Magnoliopsida</taxon>
        <taxon>eudicotyledons</taxon>
        <taxon>Gunneridae</taxon>
        <taxon>Pentapetalae</taxon>
        <taxon>rosids</taxon>
        <taxon>malvids</taxon>
        <taxon>Brassicales</taxon>
        <taxon>Brassicaceae</taxon>
        <taxon>Camelineae</taxon>
        <taxon>Arabidopsis</taxon>
    </lineage>
</organism>
<sequence>MDPNPKPAISGKDNGVFEHRSFARIGFLGNPSDVYFGRTISFTIGNFWAWAKLEPSDHLLIKPHPFHDLVQFDSLDNLVYRLENDGYYGGVRLLMAICKVFRNYCKENGIQLHDKNFTLSYDTNIPRQTGLSGSSAIVSAALSCLLDFYNVRQSIRIEVRPNLILNAEKELGIVAGLQDRVAQVYGGGLVHMDFSKEHMDKVGYGIYTIMDINLLPPLHLIYAENPSDSGKVHSTVRRRWLDGDEFIISSMAEIAKLAEEGRTALLKKDYSNLKELMNRNFDLRRSMFGDECLGAMNIEMVEVARKIGAAAKFTGSGGAVVVFCPEGPSQVKLLEEECRKSGFIVEPVKLVPTRLSSSDIKTLSKT</sequence>
<feature type="chain" id="PRO_0000407402" description="Probable glucuronokinase 2">
    <location>
        <begin position="1"/>
        <end position="366"/>
    </location>
</feature>
<feature type="active site" description="Proton acceptor" evidence="1">
    <location>
        <position position="179"/>
    </location>
</feature>
<feature type="binding site" evidence="2">
    <location>
        <begin position="126"/>
        <end position="136"/>
    </location>
    <ligand>
        <name>ATP</name>
        <dbReference type="ChEBI" id="CHEBI:30616"/>
    </ligand>
</feature>
<feature type="site" description="Transition state stabilizer" evidence="1">
    <location>
        <position position="24"/>
    </location>
</feature>
<comment type="function">
    <text evidence="1">Sugar-1-kinase with a strict substrate specificity for D-glucuronic acid and ATP. Involved in the biosynthesis of UDP-glucuronic acid (UDP-GlcA), providing nucleotide sugars for cell-wall polymers. May be also involved in a salvage pathway for glucuronic acid (By similarity).</text>
</comment>
<comment type="catalytic activity">
    <reaction>
        <text>D-glucuronate + ATP = 1-phospho-alpha-D-glucuronate + ADP + H(+)</text>
        <dbReference type="Rhea" id="RHEA:17005"/>
        <dbReference type="ChEBI" id="CHEBI:15378"/>
        <dbReference type="ChEBI" id="CHEBI:30616"/>
        <dbReference type="ChEBI" id="CHEBI:57897"/>
        <dbReference type="ChEBI" id="CHEBI:58720"/>
        <dbReference type="ChEBI" id="CHEBI:456216"/>
        <dbReference type="EC" id="2.7.1.43"/>
    </reaction>
</comment>
<comment type="cofactor">
    <cofactor evidence="1">
        <name>Mg(2+)</name>
        <dbReference type="ChEBI" id="CHEBI:18420"/>
    </cofactor>
    <cofactor evidence="1">
        <name>Mn(2+)</name>
        <dbReference type="ChEBI" id="CHEBI:29035"/>
    </cofactor>
    <cofactor evidence="1">
        <name>Co(2+)</name>
        <dbReference type="ChEBI" id="CHEBI:48828"/>
    </cofactor>
    <text evidence="1">Magnesium. Can also use other divalent cations like manganese or cobalt.</text>
</comment>
<comment type="similarity">
    <text evidence="3">Belongs to the GHMP kinase family.</text>
</comment>
<comment type="sequence caution" evidence="3">
    <conflict type="erroneous initiation">
        <sequence resource="EMBL-CDS" id="AAV74231"/>
    </conflict>
    <text>Truncated N-terminus.</text>
</comment>
<evidence type="ECO:0000250" key="1"/>
<evidence type="ECO:0000255" key="2"/>
<evidence type="ECO:0000305" key="3"/>
<protein>
    <recommendedName>
        <fullName>Probable glucuronokinase 2</fullName>
        <ecNumber>2.7.1.43</ecNumber>
    </recommendedName>
</protein>
<keyword id="KW-0067">ATP-binding</keyword>
<keyword id="KW-0119">Carbohydrate metabolism</keyword>
<keyword id="KW-0170">Cobalt</keyword>
<keyword id="KW-0418">Kinase</keyword>
<keyword id="KW-0460">Magnesium</keyword>
<keyword id="KW-0464">Manganese</keyword>
<keyword id="KW-0479">Metal-binding</keyword>
<keyword id="KW-0547">Nucleotide-binding</keyword>
<keyword id="KW-1185">Reference proteome</keyword>
<keyword id="KW-0808">Transferase</keyword>
<reference key="1">
    <citation type="journal article" date="2000" name="Nature">
        <title>Sequence and analysis of chromosome 5 of the plant Arabidopsis thaliana.</title>
        <authorList>
            <person name="Tabata S."/>
            <person name="Kaneko T."/>
            <person name="Nakamura Y."/>
            <person name="Kotani H."/>
            <person name="Kato T."/>
            <person name="Asamizu E."/>
            <person name="Miyajima N."/>
            <person name="Sasamoto S."/>
            <person name="Kimura T."/>
            <person name="Hosouchi T."/>
            <person name="Kawashima K."/>
            <person name="Kohara M."/>
            <person name="Matsumoto M."/>
            <person name="Matsuno A."/>
            <person name="Muraki A."/>
            <person name="Nakayama S."/>
            <person name="Nakazaki N."/>
            <person name="Naruo K."/>
            <person name="Okumura S."/>
            <person name="Shinpo S."/>
            <person name="Takeuchi C."/>
            <person name="Wada T."/>
            <person name="Watanabe A."/>
            <person name="Yamada M."/>
            <person name="Yasuda M."/>
            <person name="Sato S."/>
            <person name="de la Bastide M."/>
            <person name="Huang E."/>
            <person name="Spiegel L."/>
            <person name="Gnoj L."/>
            <person name="O'Shaughnessy A."/>
            <person name="Preston R."/>
            <person name="Habermann K."/>
            <person name="Murray J."/>
            <person name="Johnson D."/>
            <person name="Rohlfing T."/>
            <person name="Nelson J."/>
            <person name="Stoneking T."/>
            <person name="Pepin K."/>
            <person name="Spieth J."/>
            <person name="Sekhon M."/>
            <person name="Armstrong J."/>
            <person name="Becker M."/>
            <person name="Belter E."/>
            <person name="Cordum H."/>
            <person name="Cordes M."/>
            <person name="Courtney L."/>
            <person name="Courtney W."/>
            <person name="Dante M."/>
            <person name="Du H."/>
            <person name="Edwards J."/>
            <person name="Fryman J."/>
            <person name="Haakensen B."/>
            <person name="Lamar E."/>
            <person name="Latreille P."/>
            <person name="Leonard S."/>
            <person name="Meyer R."/>
            <person name="Mulvaney E."/>
            <person name="Ozersky P."/>
            <person name="Riley A."/>
            <person name="Strowmatt C."/>
            <person name="Wagner-McPherson C."/>
            <person name="Wollam A."/>
            <person name="Yoakum M."/>
            <person name="Bell M."/>
            <person name="Dedhia N."/>
            <person name="Parnell L."/>
            <person name="Shah R."/>
            <person name="Rodriguez M."/>
            <person name="Hoon See L."/>
            <person name="Vil D."/>
            <person name="Baker J."/>
            <person name="Kirchoff K."/>
            <person name="Toth K."/>
            <person name="King L."/>
            <person name="Bahret A."/>
            <person name="Miller B."/>
            <person name="Marra M.A."/>
            <person name="Martienssen R."/>
            <person name="McCombie W.R."/>
            <person name="Wilson R.K."/>
            <person name="Murphy G."/>
            <person name="Bancroft I."/>
            <person name="Volckaert G."/>
            <person name="Wambutt R."/>
            <person name="Duesterhoeft A."/>
            <person name="Stiekema W."/>
            <person name="Pohl T."/>
            <person name="Entian K.-D."/>
            <person name="Terryn N."/>
            <person name="Hartley N."/>
            <person name="Bent E."/>
            <person name="Johnson S."/>
            <person name="Langham S.-A."/>
            <person name="McCullagh B."/>
            <person name="Robben J."/>
            <person name="Grymonprez B."/>
            <person name="Zimmermann W."/>
            <person name="Ramsperger U."/>
            <person name="Wedler H."/>
            <person name="Balke K."/>
            <person name="Wedler E."/>
            <person name="Peters S."/>
            <person name="van Staveren M."/>
            <person name="Dirkse W."/>
            <person name="Mooijman P."/>
            <person name="Klein Lankhorst R."/>
            <person name="Weitzenegger T."/>
            <person name="Bothe G."/>
            <person name="Rose M."/>
            <person name="Hauf J."/>
            <person name="Berneiser S."/>
            <person name="Hempel S."/>
            <person name="Feldpausch M."/>
            <person name="Lamberth S."/>
            <person name="Villarroel R."/>
            <person name="Gielen J."/>
            <person name="Ardiles W."/>
            <person name="Bents O."/>
            <person name="Lemcke K."/>
            <person name="Kolesov G."/>
            <person name="Mayer K.F.X."/>
            <person name="Rudd S."/>
            <person name="Schoof H."/>
            <person name="Schueller C."/>
            <person name="Zaccaria P."/>
            <person name="Mewes H.-W."/>
            <person name="Bevan M."/>
            <person name="Fransz P.F."/>
        </authorList>
    </citation>
    <scope>NUCLEOTIDE SEQUENCE [LARGE SCALE GENOMIC DNA]</scope>
    <source>
        <strain>cv. Columbia</strain>
    </source>
</reference>
<reference key="2">
    <citation type="journal article" date="2017" name="Plant J.">
        <title>Araport11: a complete reannotation of the Arabidopsis thaliana reference genome.</title>
        <authorList>
            <person name="Cheng C.Y."/>
            <person name="Krishnakumar V."/>
            <person name="Chan A.P."/>
            <person name="Thibaud-Nissen F."/>
            <person name="Schobel S."/>
            <person name="Town C.D."/>
        </authorList>
    </citation>
    <scope>GENOME REANNOTATION</scope>
    <source>
        <strain>cv. Columbia</strain>
    </source>
</reference>
<reference key="3">
    <citation type="submission" date="2005-01" db="EMBL/GenBank/DDBJ databases">
        <title>Arabidopsis ORF clones.</title>
        <authorList>
            <person name="Kim C.J."/>
            <person name="Chen H."/>
            <person name="Cheuk R."/>
            <person name="Shinn P."/>
            <person name="Ecker J.R."/>
        </authorList>
    </citation>
    <scope>NUCLEOTIDE SEQUENCE [LARGE SCALE MRNA] OF 8-366</scope>
</reference>
<reference key="4">
    <citation type="journal article" date="2010" name="J. Biol. Chem.">
        <title>Cloning of Glucuronokinase from Arabidopsis thaliana, the last missing enzyme of the myo-inositol oxygenase pathway to nucleotide sugars.</title>
        <authorList>
            <person name="Pieslinger A.M."/>
            <person name="Hoepflinger M.C."/>
            <person name="Tenhaken R."/>
        </authorList>
    </citation>
    <scope>IDENTIFICATION</scope>
</reference>